<protein>
    <recommendedName>
        <fullName>Barley B recombinant-like protein C</fullName>
        <shortName>BBR-like protein C</shortName>
    </recommendedName>
    <alternativeName>
        <fullName>GAGA-binding transcriptional activator BBR-C</fullName>
    </alternativeName>
</protein>
<proteinExistence type="evidence at transcript level"/>
<keyword id="KW-0238">DNA-binding</keyword>
<keyword id="KW-0539">Nucleus</keyword>
<keyword id="KW-1185">Reference proteome</keyword>
<keyword id="KW-0804">Transcription</keyword>
<keyword id="KW-0805">Transcription regulation</keyword>
<dbReference type="EMBL" id="AY570520">
    <property type="protein sequence ID" value="AAS76676.1"/>
    <property type="status" value="ALT_SEQ"/>
    <property type="molecule type" value="Genomic_DNA"/>
</dbReference>
<dbReference type="EMBL" id="AY570521">
    <property type="protein sequence ID" value="AAS76677.1"/>
    <property type="status" value="ALT_INIT"/>
    <property type="molecule type" value="mRNA"/>
</dbReference>
<dbReference type="EMBL" id="AC078891">
    <property type="protein sequence ID" value="AAK52535.1"/>
    <property type="status" value="ALT_SEQ"/>
    <property type="molecule type" value="Genomic_DNA"/>
</dbReference>
<dbReference type="EMBL" id="DP000086">
    <property type="protein sequence ID" value="AAP51869.1"/>
    <property type="status" value="ALT_SEQ"/>
    <property type="molecule type" value="Genomic_DNA"/>
</dbReference>
<dbReference type="EMBL" id="AP008216">
    <property type="protein sequence ID" value="BAF25963.1"/>
    <property type="status" value="ALT_SEQ"/>
    <property type="molecule type" value="Genomic_DNA"/>
</dbReference>
<dbReference type="EMBL" id="AP014966">
    <property type="status" value="NOT_ANNOTATED_CDS"/>
    <property type="molecule type" value="Genomic_DNA"/>
</dbReference>
<dbReference type="EMBL" id="CM000147">
    <property type="protein sequence ID" value="EAZ15114.1"/>
    <property type="molecule type" value="Genomic_DNA"/>
</dbReference>
<dbReference type="RefSeq" id="XP_015614002.1">
    <property type="nucleotide sequence ID" value="XM_015758516.1"/>
</dbReference>
<dbReference type="FunCoup" id="Q7XH85">
    <property type="interactions" value="574"/>
</dbReference>
<dbReference type="PaxDb" id="39947-Q7XH85"/>
<dbReference type="KEGG" id="dosa:Os10g0115500"/>
<dbReference type="eggNOG" id="ENOG502QRPH">
    <property type="taxonomic scope" value="Eukaryota"/>
</dbReference>
<dbReference type="HOGENOM" id="CLU_039119_2_0_1"/>
<dbReference type="InParanoid" id="Q7XH85"/>
<dbReference type="OrthoDB" id="1903765at2759"/>
<dbReference type="Proteomes" id="UP000000763">
    <property type="component" value="Chromosome 10"/>
</dbReference>
<dbReference type="Proteomes" id="UP000007752">
    <property type="component" value="Chromosome 10"/>
</dbReference>
<dbReference type="Proteomes" id="UP000059680">
    <property type="component" value="Chromosome 10"/>
</dbReference>
<dbReference type="GO" id="GO:0005634">
    <property type="term" value="C:nucleus"/>
    <property type="evidence" value="ECO:0000318"/>
    <property type="project" value="GO_Central"/>
</dbReference>
<dbReference type="GO" id="GO:0003700">
    <property type="term" value="F:DNA-binding transcription factor activity"/>
    <property type="evidence" value="ECO:0000318"/>
    <property type="project" value="GO_Central"/>
</dbReference>
<dbReference type="GO" id="GO:0043565">
    <property type="term" value="F:sequence-specific DNA binding"/>
    <property type="evidence" value="ECO:0000318"/>
    <property type="project" value="GO_Central"/>
</dbReference>
<dbReference type="GO" id="GO:0009723">
    <property type="term" value="P:response to ethylene"/>
    <property type="evidence" value="ECO:0000318"/>
    <property type="project" value="GO_Central"/>
</dbReference>
<dbReference type="InterPro" id="IPR010409">
    <property type="entry name" value="GAGA-bd_tscrpt_act"/>
</dbReference>
<dbReference type="PANTHER" id="PTHR31421">
    <property type="entry name" value="PROTEIN BASIC PENTACYSTEINE3"/>
    <property type="match status" value="1"/>
</dbReference>
<dbReference type="PANTHER" id="PTHR31421:SF22">
    <property type="entry name" value="PROTEIN BASIC PENTACYSTEINE3"/>
    <property type="match status" value="1"/>
</dbReference>
<dbReference type="Pfam" id="PF06217">
    <property type="entry name" value="GAGA_bind"/>
    <property type="match status" value="1"/>
</dbReference>
<dbReference type="SMART" id="SM01226">
    <property type="entry name" value="GAGA_bind"/>
    <property type="match status" value="1"/>
</dbReference>
<comment type="function">
    <text evidence="1">Transcriptional regulator that specifically binds to GA-rich elements (GAGA-repeats) present in regulatory sequences of genes involved in developmental processes.</text>
</comment>
<comment type="subcellular location">
    <subcellularLocation>
        <location evidence="1">Nucleus</location>
    </subcellularLocation>
</comment>
<comment type="similarity">
    <text evidence="3">Belongs to the BBR/BPC family.</text>
</comment>
<comment type="sequence caution" evidence="3">
    <conflict type="erroneous gene model prediction">
        <sequence resource="EMBL-CDS" id="AAK52535"/>
    </conflict>
</comment>
<comment type="sequence caution" evidence="3">
    <conflict type="erroneous gene model prediction">
        <sequence resource="EMBL-CDS" id="AAP51869"/>
    </conflict>
</comment>
<comment type="sequence caution" evidence="3">
    <conflict type="erroneous gene model prediction">
        <sequence resource="EMBL-CDS" id="AAS76676"/>
    </conflict>
</comment>
<comment type="sequence caution" evidence="3">
    <conflict type="erroneous initiation">
        <sequence resource="EMBL-CDS" id="AAS76677"/>
    </conflict>
    <text>Extended N-terminus.</text>
</comment>
<comment type="sequence caution" evidence="3">
    <conflict type="erroneous gene model prediction">
        <sequence resource="EMBL-CDS" id="BAF25963"/>
    </conflict>
</comment>
<sequence>MNDDASMSSMGLRGWGAFYEPPARNLGLQLMSSVPADRDTKHLLSATPFLHHHQHQQYVPHHHHQPHHPRDCGTNANANGNGNGVGYGMMPATHTLRMLQHQPEPQPQLQHPPSPPHPKEECISPPLMEENVPVKPPPPKKRQQGRQPKVLRPKKPKKPAAPCEDGAPPSAPAPRRRGPRKNIGMVINGIDLDLSRIPTRICSCTGAPQQRYRWGAGGWQSACCTTTVSTYPLPMSMKPRGARIAGRKMSHGAFKKVLEKLASEGYNLNNPIDLKTFWAKHGTNKFVTIR</sequence>
<accession>Q7XH85</accession>
<accession>A3C201</accession>
<accession>Q94LN9</accession>
<evidence type="ECO:0000250" key="1"/>
<evidence type="ECO:0000256" key="2">
    <source>
        <dbReference type="SAM" id="MobiDB-lite"/>
    </source>
</evidence>
<evidence type="ECO:0000305" key="3"/>
<reference key="1">
    <citation type="journal article" date="2003" name="Plant J.">
        <title>The GA octodinucleotide repeat binding factor BBR participates in the transcriptional regulation of the homeobox gene Bkn3.</title>
        <authorList>
            <person name="Santi L."/>
            <person name="Wang Y."/>
            <person name="Stile M.R."/>
            <person name="Berendzen K.W."/>
            <person name="Wanke D."/>
            <person name="Roig C."/>
            <person name="Pozzi C."/>
            <person name="Mueller K."/>
            <person name="Mueller J."/>
            <person name="Rohde W."/>
            <person name="Salamini F."/>
        </authorList>
    </citation>
    <scope>NUCLEOTIDE SEQUENCE [GENOMIC DNA / MRNA]</scope>
</reference>
<reference key="2">
    <citation type="journal article" date="2003" name="Science">
        <title>In-depth view of structure, activity, and evolution of rice chromosome 10.</title>
        <authorList>
            <person name="Yu Y."/>
            <person name="Rambo T."/>
            <person name="Currie J."/>
            <person name="Saski C."/>
            <person name="Kim H.-R."/>
            <person name="Collura K."/>
            <person name="Thompson S."/>
            <person name="Simmons J."/>
            <person name="Yang T.-J."/>
            <person name="Nah G."/>
            <person name="Patel A.J."/>
            <person name="Thurmond S."/>
            <person name="Henry D."/>
            <person name="Oates R."/>
            <person name="Palmer M."/>
            <person name="Pries G."/>
            <person name="Gibson J."/>
            <person name="Anderson H."/>
            <person name="Paradkar M."/>
            <person name="Crane L."/>
            <person name="Dale J."/>
            <person name="Carver M.B."/>
            <person name="Wood T."/>
            <person name="Frisch D."/>
            <person name="Engler F."/>
            <person name="Soderlund C."/>
            <person name="Palmer L.E."/>
            <person name="Teytelman L."/>
            <person name="Nascimento L."/>
            <person name="De la Bastide M."/>
            <person name="Spiegel L."/>
            <person name="Ware D."/>
            <person name="O'Shaughnessy A."/>
            <person name="Dike S."/>
            <person name="Dedhia N."/>
            <person name="Preston R."/>
            <person name="Huang E."/>
            <person name="Ferraro K."/>
            <person name="Kuit K."/>
            <person name="Miller B."/>
            <person name="Zutavern T."/>
            <person name="Katzenberger F."/>
            <person name="Muller S."/>
            <person name="Balija V."/>
            <person name="Martienssen R.A."/>
            <person name="Stein L."/>
            <person name="Minx P."/>
            <person name="Johnson D."/>
            <person name="Cordum H."/>
            <person name="Mardis E."/>
            <person name="Cheng Z."/>
            <person name="Jiang J."/>
            <person name="Wilson R."/>
            <person name="McCombie W.R."/>
            <person name="Wing R.A."/>
            <person name="Yuan Q."/>
            <person name="Ouyang S."/>
            <person name="Liu J."/>
            <person name="Jones K.M."/>
            <person name="Gansberger K."/>
            <person name="Moffat K."/>
            <person name="Hill J."/>
            <person name="Tsitrin T."/>
            <person name="Overton L."/>
            <person name="Bera J."/>
            <person name="Kim M."/>
            <person name="Jin S."/>
            <person name="Tallon L."/>
            <person name="Ciecko A."/>
            <person name="Pai G."/>
            <person name="Van Aken S."/>
            <person name="Utterback T."/>
            <person name="Reidmuller S."/>
            <person name="Bormann J."/>
            <person name="Feldblyum T."/>
            <person name="Hsiao J."/>
            <person name="Zismann V."/>
            <person name="Blunt S."/>
            <person name="de Vazeille A.R."/>
            <person name="Shaffer T."/>
            <person name="Koo H."/>
            <person name="Suh B."/>
            <person name="Yang Q."/>
            <person name="Haas B."/>
            <person name="Peterson J."/>
            <person name="Pertea M."/>
            <person name="Volfovsky N."/>
            <person name="Wortman J."/>
            <person name="White O."/>
            <person name="Salzberg S.L."/>
            <person name="Fraser C.M."/>
            <person name="Buell C.R."/>
            <person name="Messing J."/>
            <person name="Song R."/>
            <person name="Fuks G."/>
            <person name="Llaca V."/>
            <person name="Kovchak S."/>
            <person name="Young S."/>
            <person name="Bowers J.E."/>
            <person name="Paterson A.H."/>
            <person name="Johns M.A."/>
            <person name="Mao L."/>
            <person name="Pan H."/>
            <person name="Dean R.A."/>
        </authorList>
    </citation>
    <scope>NUCLEOTIDE SEQUENCE [LARGE SCALE GENOMIC DNA]</scope>
    <source>
        <strain>cv. Nipponbare</strain>
    </source>
</reference>
<reference key="3">
    <citation type="journal article" date="2005" name="Nature">
        <title>The map-based sequence of the rice genome.</title>
        <authorList>
            <consortium name="International rice genome sequencing project (IRGSP)"/>
        </authorList>
    </citation>
    <scope>NUCLEOTIDE SEQUENCE [LARGE SCALE GENOMIC DNA]</scope>
    <source>
        <strain>cv. Nipponbare</strain>
    </source>
</reference>
<reference key="4">
    <citation type="journal article" date="2008" name="Nucleic Acids Res.">
        <title>The rice annotation project database (RAP-DB): 2008 update.</title>
        <authorList>
            <consortium name="The rice annotation project (RAP)"/>
        </authorList>
    </citation>
    <scope>GENOME REANNOTATION</scope>
    <source>
        <strain>cv. Nipponbare</strain>
    </source>
</reference>
<reference key="5">
    <citation type="journal article" date="2013" name="Rice">
        <title>Improvement of the Oryza sativa Nipponbare reference genome using next generation sequence and optical map data.</title>
        <authorList>
            <person name="Kawahara Y."/>
            <person name="de la Bastide M."/>
            <person name="Hamilton J.P."/>
            <person name="Kanamori H."/>
            <person name="McCombie W.R."/>
            <person name="Ouyang S."/>
            <person name="Schwartz D.C."/>
            <person name="Tanaka T."/>
            <person name="Wu J."/>
            <person name="Zhou S."/>
            <person name="Childs K.L."/>
            <person name="Davidson R.M."/>
            <person name="Lin H."/>
            <person name="Quesada-Ocampo L."/>
            <person name="Vaillancourt B."/>
            <person name="Sakai H."/>
            <person name="Lee S.S."/>
            <person name="Kim J."/>
            <person name="Numa H."/>
            <person name="Itoh T."/>
            <person name="Buell C.R."/>
            <person name="Matsumoto T."/>
        </authorList>
    </citation>
    <scope>GENOME REANNOTATION</scope>
    <source>
        <strain>cv. Nipponbare</strain>
    </source>
</reference>
<reference key="6">
    <citation type="journal article" date="2005" name="PLoS Biol.">
        <title>The genomes of Oryza sativa: a history of duplications.</title>
        <authorList>
            <person name="Yu J."/>
            <person name="Wang J."/>
            <person name="Lin W."/>
            <person name="Li S."/>
            <person name="Li H."/>
            <person name="Zhou J."/>
            <person name="Ni P."/>
            <person name="Dong W."/>
            <person name="Hu S."/>
            <person name="Zeng C."/>
            <person name="Zhang J."/>
            <person name="Zhang Y."/>
            <person name="Li R."/>
            <person name="Xu Z."/>
            <person name="Li S."/>
            <person name="Li X."/>
            <person name="Zheng H."/>
            <person name="Cong L."/>
            <person name="Lin L."/>
            <person name="Yin J."/>
            <person name="Geng J."/>
            <person name="Li G."/>
            <person name="Shi J."/>
            <person name="Liu J."/>
            <person name="Lv H."/>
            <person name="Li J."/>
            <person name="Wang J."/>
            <person name="Deng Y."/>
            <person name="Ran L."/>
            <person name="Shi X."/>
            <person name="Wang X."/>
            <person name="Wu Q."/>
            <person name="Li C."/>
            <person name="Ren X."/>
            <person name="Wang J."/>
            <person name="Wang X."/>
            <person name="Li D."/>
            <person name="Liu D."/>
            <person name="Zhang X."/>
            <person name="Ji Z."/>
            <person name="Zhao W."/>
            <person name="Sun Y."/>
            <person name="Zhang Z."/>
            <person name="Bao J."/>
            <person name="Han Y."/>
            <person name="Dong L."/>
            <person name="Ji J."/>
            <person name="Chen P."/>
            <person name="Wu S."/>
            <person name="Liu J."/>
            <person name="Xiao Y."/>
            <person name="Bu D."/>
            <person name="Tan J."/>
            <person name="Yang L."/>
            <person name="Ye C."/>
            <person name="Zhang J."/>
            <person name="Xu J."/>
            <person name="Zhou Y."/>
            <person name="Yu Y."/>
            <person name="Zhang B."/>
            <person name="Zhuang S."/>
            <person name="Wei H."/>
            <person name="Liu B."/>
            <person name="Lei M."/>
            <person name="Yu H."/>
            <person name="Li Y."/>
            <person name="Xu H."/>
            <person name="Wei S."/>
            <person name="He X."/>
            <person name="Fang L."/>
            <person name="Zhang Z."/>
            <person name="Zhang Y."/>
            <person name="Huang X."/>
            <person name="Su Z."/>
            <person name="Tong W."/>
            <person name="Li J."/>
            <person name="Tong Z."/>
            <person name="Li S."/>
            <person name="Ye J."/>
            <person name="Wang L."/>
            <person name="Fang L."/>
            <person name="Lei T."/>
            <person name="Chen C.-S."/>
            <person name="Chen H.-C."/>
            <person name="Xu Z."/>
            <person name="Li H."/>
            <person name="Huang H."/>
            <person name="Zhang F."/>
            <person name="Xu H."/>
            <person name="Li N."/>
            <person name="Zhao C."/>
            <person name="Li S."/>
            <person name="Dong L."/>
            <person name="Huang Y."/>
            <person name="Li L."/>
            <person name="Xi Y."/>
            <person name="Qi Q."/>
            <person name="Li W."/>
            <person name="Zhang B."/>
            <person name="Hu W."/>
            <person name="Zhang Y."/>
            <person name="Tian X."/>
            <person name="Jiao Y."/>
            <person name="Liang X."/>
            <person name="Jin J."/>
            <person name="Gao L."/>
            <person name="Zheng W."/>
            <person name="Hao B."/>
            <person name="Liu S.-M."/>
            <person name="Wang W."/>
            <person name="Yuan L."/>
            <person name="Cao M."/>
            <person name="McDermott J."/>
            <person name="Samudrala R."/>
            <person name="Wang J."/>
            <person name="Wong G.K.-S."/>
            <person name="Yang H."/>
        </authorList>
    </citation>
    <scope>NUCLEOTIDE SEQUENCE [LARGE SCALE GENOMIC DNA]</scope>
    <source>
        <strain>cv. Nipponbare</strain>
    </source>
</reference>
<gene>
    <name type="ordered locus">Os10g0115500</name>
    <name type="ordered locus">LOC_Os10g02620</name>
    <name type="ORF">OsJ_30527</name>
    <name type="ORF">OSJNBa0092N12.3</name>
</gene>
<feature type="chain" id="PRO_0000413445" description="Barley B recombinant-like protein C">
    <location>
        <begin position="1"/>
        <end position="290"/>
    </location>
</feature>
<feature type="region of interest" description="Disordered" evidence="2">
    <location>
        <begin position="60"/>
        <end position="90"/>
    </location>
</feature>
<feature type="region of interest" description="Disordered" evidence="2">
    <location>
        <begin position="102"/>
        <end position="183"/>
    </location>
</feature>
<feature type="compositionally biased region" description="Pro residues" evidence="2">
    <location>
        <begin position="104"/>
        <end position="116"/>
    </location>
</feature>
<feature type="compositionally biased region" description="Basic residues" evidence="2">
    <location>
        <begin position="138"/>
        <end position="158"/>
    </location>
</feature>
<name>BBRC_ORYSJ</name>
<organism>
    <name type="scientific">Oryza sativa subsp. japonica</name>
    <name type="common">Rice</name>
    <dbReference type="NCBI Taxonomy" id="39947"/>
    <lineage>
        <taxon>Eukaryota</taxon>
        <taxon>Viridiplantae</taxon>
        <taxon>Streptophyta</taxon>
        <taxon>Embryophyta</taxon>
        <taxon>Tracheophyta</taxon>
        <taxon>Spermatophyta</taxon>
        <taxon>Magnoliopsida</taxon>
        <taxon>Liliopsida</taxon>
        <taxon>Poales</taxon>
        <taxon>Poaceae</taxon>
        <taxon>BOP clade</taxon>
        <taxon>Oryzoideae</taxon>
        <taxon>Oryzeae</taxon>
        <taxon>Oryzinae</taxon>
        <taxon>Oryza</taxon>
        <taxon>Oryza sativa</taxon>
    </lineage>
</organism>